<gene>
    <name type="primary">svp</name>
    <name type="synonym">NR2F3</name>
    <name type="ORF">CG11502</name>
</gene>
<organism>
    <name type="scientific">Drosophila melanogaster</name>
    <name type="common">Fruit fly</name>
    <dbReference type="NCBI Taxonomy" id="7227"/>
    <lineage>
        <taxon>Eukaryota</taxon>
        <taxon>Metazoa</taxon>
        <taxon>Ecdysozoa</taxon>
        <taxon>Arthropoda</taxon>
        <taxon>Hexapoda</taxon>
        <taxon>Insecta</taxon>
        <taxon>Pterygota</taxon>
        <taxon>Neoptera</taxon>
        <taxon>Endopterygota</taxon>
        <taxon>Diptera</taxon>
        <taxon>Brachycera</taxon>
        <taxon>Muscomorpha</taxon>
        <taxon>Ephydroidea</taxon>
        <taxon>Drosophilidae</taxon>
        <taxon>Drosophila</taxon>
        <taxon>Sophophora</taxon>
    </lineage>
</organism>
<protein>
    <recommendedName>
        <fullName>Steroid receptor seven-up, isoforms B/C</fullName>
    </recommendedName>
    <alternativeName>
        <fullName>Nuclear receptor subfamily 2 group F member 3, isoforms B/C</fullName>
    </alternativeName>
</protein>
<sequence length="543" mass="57988">MCASPSTAPGFFNPRPQSGAELSAFDIGLSRSMGLGVPPHSAWHEPPASLGGHLHAASAGPGTTTGSVATGGGGTTPSSVASQQSAVIKQDLSCPSLNQAGSGHHPGIKEDLSSSLPSANGGSAGGHHSGSGSGSGSGVNPGHGSDMLPLIKGHGQDMLTSIKGQPTGCGSTTPSSQANSSHSQSSNSGSQIDSKQNIECVVCGDKSSGKHYGQFTCEGCKSFFKRSVRRNLTYSCRGSRNCPIDQHHRNQCQYCRLKKCLKMGMRREAVQRGRVPPTQPGLAGMHGQYQIANGDPMGIAGFNGHSYLSSYISLLLRAEPYPTSRYGQCMQPNNIMGIDNICELAARLLFSAVEWAKNIPFFPELQVTDQVALLRLVWSELFVLNASQCSMPLHVAPLLAAAGLHASPMAADRVVAFMDHIRIFQEQVEKLKALHVDSAEYSCLKAIVLFTTDACGLSDVTHIESLQEKSQCALEEYCRTQYPNQPTRFGKLLLRLPSLRTVSSQVIEQLFFVRLVGKTPIETLIRDMLLSGNSFSWPYLPSM</sequence>
<feature type="chain" id="PRO_0000053610" description="Steroid receptor seven-up, isoforms B/C">
    <location>
        <begin position="1"/>
        <end position="543"/>
    </location>
</feature>
<feature type="domain" description="NR LBD" evidence="2">
    <location>
        <begin position="307"/>
        <end position="532"/>
    </location>
</feature>
<feature type="DNA-binding region" description="Nuclear receptor" evidence="1">
    <location>
        <begin position="197"/>
        <end position="272"/>
    </location>
</feature>
<feature type="zinc finger region" description="NR C4-type" evidence="1">
    <location>
        <begin position="200"/>
        <end position="220"/>
    </location>
</feature>
<feature type="zinc finger region" description="NR C4-type" evidence="1">
    <location>
        <begin position="236"/>
        <end position="260"/>
    </location>
</feature>
<feature type="region of interest" description="Disordered" evidence="3">
    <location>
        <begin position="38"/>
        <end position="191"/>
    </location>
</feature>
<feature type="compositionally biased region" description="Low complexity" evidence="3">
    <location>
        <begin position="56"/>
        <end position="68"/>
    </location>
</feature>
<feature type="compositionally biased region" description="Polar residues" evidence="3">
    <location>
        <begin position="83"/>
        <end position="101"/>
    </location>
</feature>
<feature type="compositionally biased region" description="Gly residues" evidence="3">
    <location>
        <begin position="122"/>
        <end position="141"/>
    </location>
</feature>
<feature type="compositionally biased region" description="Polar residues" evidence="3">
    <location>
        <begin position="158"/>
        <end position="170"/>
    </location>
</feature>
<feature type="compositionally biased region" description="Low complexity" evidence="3">
    <location>
        <begin position="171"/>
        <end position="191"/>
    </location>
</feature>
<feature type="splice variant" id="VSP_013348" description="In isoform C." evidence="6">
    <location>
        <begin position="1"/>
        <end position="262"/>
    </location>
</feature>
<feature type="sequence conflict" description="In Ref. 4; AAM76194." evidence="7" ref="4">
    <original>C</original>
    <variation>Y</variation>
    <location>
        <position position="203"/>
    </location>
</feature>
<dbReference type="EMBL" id="M28863">
    <property type="protein sequence ID" value="AAA62770.1"/>
    <property type="molecule type" value="mRNA"/>
</dbReference>
<dbReference type="EMBL" id="AE014297">
    <property type="protein sequence ID" value="AAF54773.1"/>
    <property type="molecule type" value="Genomic_DNA"/>
</dbReference>
<dbReference type="EMBL" id="AE014297">
    <property type="protein sequence ID" value="AAF54774.2"/>
    <property type="molecule type" value="Genomic_DNA"/>
</dbReference>
<dbReference type="EMBL" id="AY075272">
    <property type="protein sequence ID" value="AAL68139.1"/>
    <property type="molecule type" value="mRNA"/>
</dbReference>
<dbReference type="EMBL" id="AY129452">
    <property type="protein sequence ID" value="AAM76194.1"/>
    <property type="molecule type" value="mRNA"/>
</dbReference>
<dbReference type="PIR" id="A32693">
    <property type="entry name" value="A32693"/>
</dbReference>
<dbReference type="RefSeq" id="NP_524325.1">
    <molecule id="P16375-1"/>
    <property type="nucleotide sequence ID" value="NM_079601.3"/>
</dbReference>
<dbReference type="RefSeq" id="NP_731682.1">
    <molecule id="P16375-2"/>
    <property type="nucleotide sequence ID" value="NM_169459.2"/>
</dbReference>
<dbReference type="SMR" id="P16375"/>
<dbReference type="BioGRID" id="66603">
    <property type="interactions" value="76"/>
</dbReference>
<dbReference type="IntAct" id="P16375">
    <property type="interactions" value="44"/>
</dbReference>
<dbReference type="DNASU" id="41491"/>
<dbReference type="EnsemblMetazoa" id="FBtr0082562">
    <molecule id="P16375-2"/>
    <property type="protein sequence ID" value="FBpp0082034"/>
    <property type="gene ID" value="FBgn0003651"/>
</dbReference>
<dbReference type="EnsemblMetazoa" id="FBtr0082564">
    <molecule id="P16375-1"/>
    <property type="protein sequence ID" value="FBpp0082036"/>
    <property type="gene ID" value="FBgn0003651"/>
</dbReference>
<dbReference type="GeneID" id="41491"/>
<dbReference type="KEGG" id="dme:Dmel_CG11502"/>
<dbReference type="AGR" id="FB:FBgn0003651"/>
<dbReference type="CTD" id="41491"/>
<dbReference type="FlyBase" id="FBgn0003651">
    <property type="gene designation" value="svp"/>
</dbReference>
<dbReference type="VEuPathDB" id="VectorBase:FBgn0003651"/>
<dbReference type="HOGENOM" id="CLU_007368_8_1_1"/>
<dbReference type="OMA" id="QWKEEHR"/>
<dbReference type="OrthoDB" id="5873264at2759"/>
<dbReference type="SignaLink" id="P16375"/>
<dbReference type="BioGRID-ORCS" id="41491">
    <property type="hits" value="0 hits in 3 CRISPR screens"/>
</dbReference>
<dbReference type="GenomeRNAi" id="41491"/>
<dbReference type="Proteomes" id="UP000000803">
    <property type="component" value="Chromosome 3R"/>
</dbReference>
<dbReference type="Bgee" id="FBgn0003651">
    <property type="expression patterns" value="Expressed in lamina monopolar neuron L1 (Drosophila) in insect head and 138 other cell types or tissues"/>
</dbReference>
<dbReference type="ExpressionAtlas" id="P16375">
    <property type="expression patterns" value="baseline and differential"/>
</dbReference>
<dbReference type="GO" id="GO:0005737">
    <property type="term" value="C:cytoplasm"/>
    <property type="evidence" value="ECO:0000314"/>
    <property type="project" value="FlyBase"/>
</dbReference>
<dbReference type="GO" id="GO:0005634">
    <property type="term" value="C:nucleus"/>
    <property type="evidence" value="ECO:0007669"/>
    <property type="project" value="UniProtKB-SubCell"/>
</dbReference>
<dbReference type="GO" id="GO:0045202">
    <property type="term" value="C:synapse"/>
    <property type="evidence" value="ECO:0007669"/>
    <property type="project" value="GOC"/>
</dbReference>
<dbReference type="GO" id="GO:0001227">
    <property type="term" value="F:DNA-binding transcription repressor activity, RNA polymerase II-specific"/>
    <property type="evidence" value="ECO:0000314"/>
    <property type="project" value="FlyBase"/>
</dbReference>
<dbReference type="GO" id="GO:0004879">
    <property type="term" value="F:nuclear receptor activity"/>
    <property type="evidence" value="ECO:0000318"/>
    <property type="project" value="GO_Central"/>
</dbReference>
<dbReference type="GO" id="GO:0046982">
    <property type="term" value="F:protein heterodimerization activity"/>
    <property type="evidence" value="ECO:0000353"/>
    <property type="project" value="FlyBase"/>
</dbReference>
<dbReference type="GO" id="GO:0042803">
    <property type="term" value="F:protein homodimerization activity"/>
    <property type="evidence" value="ECO:0000353"/>
    <property type="project" value="FlyBase"/>
</dbReference>
<dbReference type="GO" id="GO:0000978">
    <property type="term" value="F:RNA polymerase II cis-regulatory region sequence-specific DNA binding"/>
    <property type="evidence" value="ECO:0000318"/>
    <property type="project" value="GO_Central"/>
</dbReference>
<dbReference type="GO" id="GO:0008270">
    <property type="term" value="F:zinc ion binding"/>
    <property type="evidence" value="ECO:0007669"/>
    <property type="project" value="UniProtKB-KW"/>
</dbReference>
<dbReference type="GO" id="GO:0007510">
    <property type="term" value="P:cardioblast cell fate determination"/>
    <property type="evidence" value="ECO:0000316"/>
    <property type="project" value="FlyBase"/>
</dbReference>
<dbReference type="GO" id="GO:0030154">
    <property type="term" value="P:cell differentiation"/>
    <property type="evidence" value="ECO:0000318"/>
    <property type="project" value="GO_Central"/>
</dbReference>
<dbReference type="GO" id="GO:0061331">
    <property type="term" value="P:epithelial cell proliferation involved in Malpighian tubule morphogenesis"/>
    <property type="evidence" value="ECO:0000315"/>
    <property type="project" value="FlyBase"/>
</dbReference>
<dbReference type="GO" id="GO:0007503">
    <property type="term" value="P:fat body development"/>
    <property type="evidence" value="ECO:0000304"/>
    <property type="project" value="FlyBase"/>
</dbReference>
<dbReference type="GO" id="GO:0021782">
    <property type="term" value="P:glial cell development"/>
    <property type="evidence" value="ECO:0000315"/>
    <property type="project" value="FlyBase"/>
</dbReference>
<dbReference type="GO" id="GO:0007507">
    <property type="term" value="P:heart development"/>
    <property type="evidence" value="ECO:0000304"/>
    <property type="project" value="FlyBase"/>
</dbReference>
<dbReference type="GO" id="GO:0007399">
    <property type="term" value="P:nervous system development"/>
    <property type="evidence" value="ECO:0000318"/>
    <property type="project" value="GO_Central"/>
</dbReference>
<dbReference type="GO" id="GO:0014019">
    <property type="term" value="P:neuroblast development"/>
    <property type="evidence" value="ECO:0000315"/>
    <property type="project" value="FlyBase"/>
</dbReference>
<dbReference type="GO" id="GO:0007270">
    <property type="term" value="P:neuron-neuron synaptic transmission"/>
    <property type="evidence" value="ECO:0000315"/>
    <property type="project" value="FlyBase"/>
</dbReference>
<dbReference type="GO" id="GO:0046530">
    <property type="term" value="P:photoreceptor cell differentiation"/>
    <property type="evidence" value="ECO:0000315"/>
    <property type="project" value="FlyBase"/>
</dbReference>
<dbReference type="GO" id="GO:0042331">
    <property type="term" value="P:phototaxis"/>
    <property type="evidence" value="ECO:0000315"/>
    <property type="project" value="FlyBase"/>
</dbReference>
<dbReference type="GO" id="GO:0007462">
    <property type="term" value="P:R1/R6 cell fate commitment"/>
    <property type="evidence" value="ECO:0000304"/>
    <property type="project" value="FlyBase"/>
</dbReference>
<dbReference type="GO" id="GO:0007464">
    <property type="term" value="P:R3/R4 cell fate commitment"/>
    <property type="evidence" value="ECO:0000304"/>
    <property type="project" value="FlyBase"/>
</dbReference>
<dbReference type="GO" id="GO:0006357">
    <property type="term" value="P:regulation of transcription by RNA polymerase II"/>
    <property type="evidence" value="ECO:0000318"/>
    <property type="project" value="GO_Central"/>
</dbReference>
<dbReference type="GO" id="GO:0007419">
    <property type="term" value="P:ventral cord development"/>
    <property type="evidence" value="ECO:0007001"/>
    <property type="project" value="FlyBase"/>
</dbReference>
<dbReference type="GO" id="GO:0007601">
    <property type="term" value="P:visual perception"/>
    <property type="evidence" value="ECO:0007669"/>
    <property type="project" value="UniProtKB-KW"/>
</dbReference>
<dbReference type="CDD" id="cd06958">
    <property type="entry name" value="NR_DBD_COUP_TF"/>
    <property type="match status" value="1"/>
</dbReference>
<dbReference type="CDD" id="cd06948">
    <property type="entry name" value="NR_LBD_COUP-TF"/>
    <property type="match status" value="1"/>
</dbReference>
<dbReference type="FunFam" id="1.10.565.10:FF:000003">
    <property type="entry name" value="Coup transcription factor 2 isoform 1"/>
    <property type="match status" value="1"/>
</dbReference>
<dbReference type="FunFam" id="3.30.50.10:FF:000016">
    <property type="entry name" value="Nuclear receptor subfamily 2 group F member 1"/>
    <property type="match status" value="1"/>
</dbReference>
<dbReference type="Gene3D" id="3.30.50.10">
    <property type="entry name" value="Erythroid Transcription Factor GATA-1, subunit A"/>
    <property type="match status" value="1"/>
</dbReference>
<dbReference type="Gene3D" id="1.10.565.10">
    <property type="entry name" value="Retinoid X Receptor"/>
    <property type="match status" value="1"/>
</dbReference>
<dbReference type="InterPro" id="IPR035500">
    <property type="entry name" value="NHR-like_dom_sf"/>
</dbReference>
<dbReference type="InterPro" id="IPR000536">
    <property type="entry name" value="Nucl_hrmn_rcpt_lig-bd"/>
</dbReference>
<dbReference type="InterPro" id="IPR050274">
    <property type="entry name" value="Nuclear_hormone_rcpt_NR2"/>
</dbReference>
<dbReference type="InterPro" id="IPR001723">
    <property type="entry name" value="Nuclear_hrmn_rcpt"/>
</dbReference>
<dbReference type="InterPro" id="IPR001628">
    <property type="entry name" value="Znf_hrmn_rcpt"/>
</dbReference>
<dbReference type="InterPro" id="IPR013088">
    <property type="entry name" value="Znf_NHR/GATA"/>
</dbReference>
<dbReference type="PANTHER" id="PTHR24083">
    <property type="entry name" value="NUCLEAR HORMONE RECEPTOR"/>
    <property type="match status" value="1"/>
</dbReference>
<dbReference type="Pfam" id="PF00104">
    <property type="entry name" value="Hormone_recep"/>
    <property type="match status" value="1"/>
</dbReference>
<dbReference type="Pfam" id="PF00105">
    <property type="entry name" value="zf-C4"/>
    <property type="match status" value="1"/>
</dbReference>
<dbReference type="PRINTS" id="PR01282">
    <property type="entry name" value="COUPTNFACTOR"/>
</dbReference>
<dbReference type="PRINTS" id="PR00398">
    <property type="entry name" value="STRDHORMONER"/>
</dbReference>
<dbReference type="PRINTS" id="PR00047">
    <property type="entry name" value="STROIDFINGER"/>
</dbReference>
<dbReference type="SMART" id="SM00430">
    <property type="entry name" value="HOLI"/>
    <property type="match status" value="1"/>
</dbReference>
<dbReference type="SMART" id="SM00399">
    <property type="entry name" value="ZnF_C4"/>
    <property type="match status" value="1"/>
</dbReference>
<dbReference type="SUPFAM" id="SSF57716">
    <property type="entry name" value="Glucocorticoid receptor-like (DNA-binding domain)"/>
    <property type="match status" value="1"/>
</dbReference>
<dbReference type="SUPFAM" id="SSF48508">
    <property type="entry name" value="Nuclear receptor ligand-binding domain"/>
    <property type="match status" value="1"/>
</dbReference>
<dbReference type="PROSITE" id="PS51843">
    <property type="entry name" value="NR_LBD"/>
    <property type="match status" value="1"/>
</dbReference>
<dbReference type="PROSITE" id="PS00031">
    <property type="entry name" value="NUCLEAR_REC_DBD_1"/>
    <property type="match status" value="1"/>
</dbReference>
<dbReference type="PROSITE" id="PS51030">
    <property type="entry name" value="NUCLEAR_REC_DBD_2"/>
    <property type="match status" value="1"/>
</dbReference>
<proteinExistence type="evidence at protein level"/>
<reference key="1">
    <citation type="journal article" date="1990" name="Cell">
        <title>The Drosophila seven-up gene, a member of the steroid receptor gene superfamily, controls photoreceptor cell fates.</title>
        <authorList>
            <person name="Mlodzik M."/>
            <person name="Hiromi Y."/>
            <person name="Weber U."/>
            <person name="Goodman C.S."/>
            <person name="Rubin G.M."/>
        </authorList>
    </citation>
    <scope>NUCLEOTIDE SEQUENCE [MRNA] (ISOFORM B)</scope>
    <scope>FUNCTION</scope>
    <scope>TISSUE SPECIFICITY</scope>
    <source>
        <tissue>Embryo</tissue>
    </source>
</reference>
<reference key="2">
    <citation type="journal article" date="2000" name="Science">
        <title>The genome sequence of Drosophila melanogaster.</title>
        <authorList>
            <person name="Adams M.D."/>
            <person name="Celniker S.E."/>
            <person name="Holt R.A."/>
            <person name="Evans C.A."/>
            <person name="Gocayne J.D."/>
            <person name="Amanatides P.G."/>
            <person name="Scherer S.E."/>
            <person name="Li P.W."/>
            <person name="Hoskins R.A."/>
            <person name="Galle R.F."/>
            <person name="George R.A."/>
            <person name="Lewis S.E."/>
            <person name="Richards S."/>
            <person name="Ashburner M."/>
            <person name="Henderson S.N."/>
            <person name="Sutton G.G."/>
            <person name="Wortman J.R."/>
            <person name="Yandell M.D."/>
            <person name="Zhang Q."/>
            <person name="Chen L.X."/>
            <person name="Brandon R.C."/>
            <person name="Rogers Y.-H.C."/>
            <person name="Blazej R.G."/>
            <person name="Champe M."/>
            <person name="Pfeiffer B.D."/>
            <person name="Wan K.H."/>
            <person name="Doyle C."/>
            <person name="Baxter E.G."/>
            <person name="Helt G."/>
            <person name="Nelson C.R."/>
            <person name="Miklos G.L.G."/>
            <person name="Abril J.F."/>
            <person name="Agbayani A."/>
            <person name="An H.-J."/>
            <person name="Andrews-Pfannkoch C."/>
            <person name="Baldwin D."/>
            <person name="Ballew R.M."/>
            <person name="Basu A."/>
            <person name="Baxendale J."/>
            <person name="Bayraktaroglu L."/>
            <person name="Beasley E.M."/>
            <person name="Beeson K.Y."/>
            <person name="Benos P.V."/>
            <person name="Berman B.P."/>
            <person name="Bhandari D."/>
            <person name="Bolshakov S."/>
            <person name="Borkova D."/>
            <person name="Botchan M.R."/>
            <person name="Bouck J."/>
            <person name="Brokstein P."/>
            <person name="Brottier P."/>
            <person name="Burtis K.C."/>
            <person name="Busam D.A."/>
            <person name="Butler H."/>
            <person name="Cadieu E."/>
            <person name="Center A."/>
            <person name="Chandra I."/>
            <person name="Cherry J.M."/>
            <person name="Cawley S."/>
            <person name="Dahlke C."/>
            <person name="Davenport L.B."/>
            <person name="Davies P."/>
            <person name="de Pablos B."/>
            <person name="Delcher A."/>
            <person name="Deng Z."/>
            <person name="Mays A.D."/>
            <person name="Dew I."/>
            <person name="Dietz S.M."/>
            <person name="Dodson K."/>
            <person name="Doup L.E."/>
            <person name="Downes M."/>
            <person name="Dugan-Rocha S."/>
            <person name="Dunkov B.C."/>
            <person name="Dunn P."/>
            <person name="Durbin K.J."/>
            <person name="Evangelista C.C."/>
            <person name="Ferraz C."/>
            <person name="Ferriera S."/>
            <person name="Fleischmann W."/>
            <person name="Fosler C."/>
            <person name="Gabrielian A.E."/>
            <person name="Garg N.S."/>
            <person name="Gelbart W.M."/>
            <person name="Glasser K."/>
            <person name="Glodek A."/>
            <person name="Gong F."/>
            <person name="Gorrell J.H."/>
            <person name="Gu Z."/>
            <person name="Guan P."/>
            <person name="Harris M."/>
            <person name="Harris N.L."/>
            <person name="Harvey D.A."/>
            <person name="Heiman T.J."/>
            <person name="Hernandez J.R."/>
            <person name="Houck J."/>
            <person name="Hostin D."/>
            <person name="Houston K.A."/>
            <person name="Howland T.J."/>
            <person name="Wei M.-H."/>
            <person name="Ibegwam C."/>
            <person name="Jalali M."/>
            <person name="Kalush F."/>
            <person name="Karpen G.H."/>
            <person name="Ke Z."/>
            <person name="Kennison J.A."/>
            <person name="Ketchum K.A."/>
            <person name="Kimmel B.E."/>
            <person name="Kodira C.D."/>
            <person name="Kraft C.L."/>
            <person name="Kravitz S."/>
            <person name="Kulp D."/>
            <person name="Lai Z."/>
            <person name="Lasko P."/>
            <person name="Lei Y."/>
            <person name="Levitsky A.A."/>
            <person name="Li J.H."/>
            <person name="Li Z."/>
            <person name="Liang Y."/>
            <person name="Lin X."/>
            <person name="Liu X."/>
            <person name="Mattei B."/>
            <person name="McIntosh T.C."/>
            <person name="McLeod M.P."/>
            <person name="McPherson D."/>
            <person name="Merkulov G."/>
            <person name="Milshina N.V."/>
            <person name="Mobarry C."/>
            <person name="Morris J."/>
            <person name="Moshrefi A."/>
            <person name="Mount S.M."/>
            <person name="Moy M."/>
            <person name="Murphy B."/>
            <person name="Murphy L."/>
            <person name="Muzny D.M."/>
            <person name="Nelson D.L."/>
            <person name="Nelson D.R."/>
            <person name="Nelson K.A."/>
            <person name="Nixon K."/>
            <person name="Nusskern D.R."/>
            <person name="Pacleb J.M."/>
            <person name="Palazzolo M."/>
            <person name="Pittman G.S."/>
            <person name="Pan S."/>
            <person name="Pollard J."/>
            <person name="Puri V."/>
            <person name="Reese M.G."/>
            <person name="Reinert K."/>
            <person name="Remington K."/>
            <person name="Saunders R.D.C."/>
            <person name="Scheeler F."/>
            <person name="Shen H."/>
            <person name="Shue B.C."/>
            <person name="Siden-Kiamos I."/>
            <person name="Simpson M."/>
            <person name="Skupski M.P."/>
            <person name="Smith T.J."/>
            <person name="Spier E."/>
            <person name="Spradling A.C."/>
            <person name="Stapleton M."/>
            <person name="Strong R."/>
            <person name="Sun E."/>
            <person name="Svirskas R."/>
            <person name="Tector C."/>
            <person name="Turner R."/>
            <person name="Venter E."/>
            <person name="Wang A.H."/>
            <person name="Wang X."/>
            <person name="Wang Z.-Y."/>
            <person name="Wassarman D.A."/>
            <person name="Weinstock G.M."/>
            <person name="Weissenbach J."/>
            <person name="Williams S.M."/>
            <person name="Woodage T."/>
            <person name="Worley K.C."/>
            <person name="Wu D."/>
            <person name="Yang S."/>
            <person name="Yao Q.A."/>
            <person name="Ye J."/>
            <person name="Yeh R.-F."/>
            <person name="Zaveri J.S."/>
            <person name="Zhan M."/>
            <person name="Zhang G."/>
            <person name="Zhao Q."/>
            <person name="Zheng L."/>
            <person name="Zheng X.H."/>
            <person name="Zhong F.N."/>
            <person name="Zhong W."/>
            <person name="Zhou X."/>
            <person name="Zhu S.C."/>
            <person name="Zhu X."/>
            <person name="Smith H.O."/>
            <person name="Gibbs R.A."/>
            <person name="Myers E.W."/>
            <person name="Rubin G.M."/>
            <person name="Venter J.C."/>
        </authorList>
    </citation>
    <scope>NUCLEOTIDE SEQUENCE [LARGE SCALE GENOMIC DNA]</scope>
    <source>
        <strain>Berkeley</strain>
    </source>
</reference>
<reference key="3">
    <citation type="journal article" date="2002" name="Genome Biol.">
        <title>Annotation of the Drosophila melanogaster euchromatic genome: a systematic review.</title>
        <authorList>
            <person name="Misra S."/>
            <person name="Crosby M.A."/>
            <person name="Mungall C.J."/>
            <person name="Matthews B.B."/>
            <person name="Campbell K.S."/>
            <person name="Hradecky P."/>
            <person name="Huang Y."/>
            <person name="Kaminker J.S."/>
            <person name="Millburn G.H."/>
            <person name="Prochnik S.E."/>
            <person name="Smith C.D."/>
            <person name="Tupy J.L."/>
            <person name="Whitfield E.J."/>
            <person name="Bayraktaroglu L."/>
            <person name="Berman B.P."/>
            <person name="Bettencourt B.R."/>
            <person name="Celniker S.E."/>
            <person name="de Grey A.D.N.J."/>
            <person name="Drysdale R.A."/>
            <person name="Harris N.L."/>
            <person name="Richter J."/>
            <person name="Russo S."/>
            <person name="Schroeder A.J."/>
            <person name="Shu S.Q."/>
            <person name="Stapleton M."/>
            <person name="Yamada C."/>
            <person name="Ashburner M."/>
            <person name="Gelbart W.M."/>
            <person name="Rubin G.M."/>
            <person name="Lewis S.E."/>
        </authorList>
    </citation>
    <scope>GENOME REANNOTATION</scope>
    <scope>ALTERNATIVE SPLICING</scope>
    <source>
        <strain>Berkeley</strain>
    </source>
</reference>
<reference key="4">
    <citation type="journal article" date="2002" name="Genome Biol.">
        <title>A Drosophila full-length cDNA resource.</title>
        <authorList>
            <person name="Stapleton M."/>
            <person name="Carlson J.W."/>
            <person name="Brokstein P."/>
            <person name="Yu C."/>
            <person name="Champe M."/>
            <person name="George R.A."/>
            <person name="Guarin H."/>
            <person name="Kronmiller B."/>
            <person name="Pacleb J.M."/>
            <person name="Park S."/>
            <person name="Wan K.H."/>
            <person name="Rubin G.M."/>
            <person name="Celniker S.E."/>
        </authorList>
    </citation>
    <scope>NUCLEOTIDE SEQUENCE [LARGE SCALE MRNA] (ISOFORMS B AND C)</scope>
    <source>
        <strain>Berkeley</strain>
        <tissue>Embryo</tissue>
        <tissue>Testis</tissue>
    </source>
</reference>
<reference key="5">
    <citation type="journal article" date="2005" name="Dev. Cell">
        <title>Seven-up controls switching of transcription factors that specify temporal identities of Drosophila neuroblasts.</title>
        <authorList>
            <person name="Kanai M.I."/>
            <person name="Okabe M."/>
            <person name="Hiromi Y."/>
        </authorList>
    </citation>
    <scope>FUNCTION</scope>
    <scope>TISSUE SPECIFICITY</scope>
</reference>
<evidence type="ECO:0000255" key="1">
    <source>
        <dbReference type="PROSITE-ProRule" id="PRU00407"/>
    </source>
</evidence>
<evidence type="ECO:0000255" key="2">
    <source>
        <dbReference type="PROSITE-ProRule" id="PRU01189"/>
    </source>
</evidence>
<evidence type="ECO:0000256" key="3">
    <source>
        <dbReference type="SAM" id="MobiDB-lite"/>
    </source>
</evidence>
<evidence type="ECO:0000269" key="4">
    <source>
    </source>
</evidence>
<evidence type="ECO:0000269" key="5">
    <source>
    </source>
</evidence>
<evidence type="ECO:0000303" key="6">
    <source>
    </source>
</evidence>
<evidence type="ECO:0000305" key="7"/>
<accession>P16375</accession>
<accession>Q8MQJ1</accession>
<accession>Q8T8U4</accession>
<accession>Q9VGA9</accession>
<accession>Q9VGB0</accession>
<comment type="function">
    <text evidence="4 5">Receptor that is required in photoreceptors R1, R3, R4 and R6 during eye development; generation of the ganglion mother cell-2 (GMC-2) fate in the nb7-3 lineage, coinciding with the transition in the expression of HB to KR in the neuroblasts (NBs).</text>
</comment>
<comment type="interaction">
    <interactant intactId="EBI-131834">
        <id>P16375</id>
    </interactant>
    <interactant intactId="EBI-178344">
        <id>Q9W3Q4</id>
        <label>Dmel\CG15478</label>
    </interactant>
    <organismsDiffer>false</organismsDiffer>
    <experiments>4</experiments>
</comment>
<comment type="interaction">
    <interactant intactId="EBI-131834">
        <id>P16375</id>
    </interactant>
    <interactant intactId="EBI-15112591">
        <id>Q8I942</id>
        <label>Dmel\CG32846</label>
    </interactant>
    <organismsDiffer>false</organismsDiffer>
    <experiments>4</experiments>
</comment>
<comment type="subcellular location">
    <subcellularLocation>
        <location evidence="1">Nucleus</location>
    </subcellularLocation>
</comment>
<comment type="alternative products">
    <event type="alternative splicing"/>
    <isoform>
        <id>P16375-1</id>
        <name>B</name>
        <name>Type 1</name>
        <sequence type="displayed"/>
    </isoform>
    <isoform>
        <id>P16375-2</id>
        <name>C</name>
        <sequence type="described" ref="VSP_013348"/>
    </isoform>
    <isoform>
        <id>P16376-1</id>
        <name>A</name>
        <name>Type 2</name>
        <sequence type="external"/>
    </isoform>
</comment>
<comment type="tissue specificity">
    <text evidence="4 5">Expressed in several embryonic tissues; dorsal vessel, oenocyte and fat body. CNS expression is dynamic and confined to temporally restricted subsections of the NB lineage; expressed in many NB and GMCs, but only a small number of neurons.</text>
</comment>
<comment type="similarity">
    <text evidence="7">Belongs to the nuclear hormone receptor family. NR2 subfamily.</text>
</comment>
<keyword id="KW-0025">Alternative splicing</keyword>
<keyword id="KW-0238">DNA-binding</keyword>
<keyword id="KW-0479">Metal-binding</keyword>
<keyword id="KW-0539">Nucleus</keyword>
<keyword id="KW-0675">Receptor</keyword>
<keyword id="KW-1185">Reference proteome</keyword>
<keyword id="KW-0716">Sensory transduction</keyword>
<keyword id="KW-0804">Transcription</keyword>
<keyword id="KW-0805">Transcription regulation</keyword>
<keyword id="KW-0844">Vision</keyword>
<keyword id="KW-0862">Zinc</keyword>
<keyword id="KW-0863">Zinc-finger</keyword>
<name>7UP1_DROME</name>